<proteinExistence type="evidence at protein level"/>
<comment type="function">
    <text evidence="1 15 16 20 21">Proton-associated glucose and sucrose transporter (By similarity). May be able to transport also fructose (By similarity). Expressed at a late melanosome maturation stage where functions as proton/glucose exporter which increase lumenal pH by decreasing glycolysis (PubMed:32966160, PubMed:35469906). Regulates melanogenesis by maintaining melanosome neutralization that is initially initiated by transient OCA2 and required for a proper function of the tyrosinase TYR (PubMed:32966160, PubMed:35469906).</text>
</comment>
<comment type="catalytic activity">
    <reaction evidence="1">
        <text>sucrose(out) + H(+)(out) = sucrose(in) + H(+)(in)</text>
        <dbReference type="Rhea" id="RHEA:72187"/>
        <dbReference type="ChEBI" id="CHEBI:15378"/>
        <dbReference type="ChEBI" id="CHEBI:17992"/>
    </reaction>
</comment>
<comment type="catalytic activity">
    <reaction evidence="1">
        <text>D-glucose(out) + H(+)(out) = D-glucose(in) + H(+)(in)</text>
        <dbReference type="Rhea" id="RHEA:69556"/>
        <dbReference type="ChEBI" id="CHEBI:4167"/>
        <dbReference type="ChEBI" id="CHEBI:15378"/>
    </reaction>
</comment>
<comment type="subunit">
    <text evidence="1">Interacts with TYRP1.</text>
</comment>
<comment type="subcellular location">
    <subcellularLocation>
        <location evidence="12 20">Melanosome membrane</location>
        <topology evidence="12">Multi-pass membrane protein</topology>
    </subcellularLocation>
    <text evidence="20">Enriched in mature melanocyte membrane subdomains.</text>
</comment>
<comment type="alternative products">
    <event type="alternative splicing"/>
    <isoform>
        <id>Q9UMX9-1</id>
        <name>1</name>
        <name>AIM-1a</name>
        <sequence type="displayed"/>
    </isoform>
    <isoform>
        <id>Q9UMX9-2</id>
        <name>2</name>
        <name>AIM-1b</name>
        <sequence type="described" ref="VSP_006297 VSP_006298 VSP_006299"/>
    </isoform>
    <isoform>
        <id>Q9UMX9-3</id>
        <name>3</name>
        <name>AIM-1c</name>
        <sequence type="described" ref="VSP_006296"/>
    </isoform>
    <isoform>
        <id>Q9UMX9-4</id>
        <name>4</name>
        <sequence type="described" ref="VSP_041220 VSP_041221"/>
    </isoform>
    <text>Additional isoforms seem to exist.</text>
</comment>
<comment type="tissue specificity">
    <text evidence="20">Expressed in mature melanocytes.</text>
</comment>
<comment type="developmental stage">
    <text evidence="20">Expressed at late stages of melanosome differentiation.</text>
</comment>
<comment type="polymorphism">
    <text evidence="15 16 20">Genetic variants in SLC45A2 define the skin/hair/eye pigmentation variation locus 5 (SHEP5) [MIM:227240]. Hair, eye and skin pigmentation are among the most visible examples of human phenotypic variation, with a broad normal range that is subject to substantial geographic stratification. In the case of skin, individuals tend to have lighter pigmentation with increasing distance from the equator. By contrast, the majority of variation in human eye and hair color is found among individuals of European ancestry, with most other human populations fixed for brown eyes and black hair.</text>
</comment>
<comment type="disease" evidence="4 5 6 9 13 17 18 22">
    <disease id="DI-02086">
        <name>Albinism, oculocutaneous, 4</name>
        <acronym>OCA4</acronym>
        <description>A disorder of pigmentation characterized by reduced biosynthesis of melanin in the skin, hair and eyes. Patients show reduced or lacking pigmentation associated with classic albinism ocular abnormalities, including decreased visual acuity, macular hypoplasia, optic dysplasia, atypical choroidal vessels, and nystagmus.</description>
        <dbReference type="MIM" id="606574"/>
    </disease>
    <text>The disease is caused by variants affecting the gene represented in this entry.</text>
</comment>
<comment type="similarity">
    <text evidence="24">Belongs to the glycoside-pentoside-hexuronide (GPH) cation symporter transporter (TC 2.A.2) family.</text>
</comment>
<comment type="sequence caution" evidence="24">
    <conflict type="frameshift">
        <sequence resource="EMBL-CDS" id="AAH03597"/>
    </conflict>
</comment>
<comment type="online information" name="Albinism database (ADB)">
    <link uri="http://www.ifpcs.org/albinism/oca4mut.html"/>
    <text>SLC45A2 mutations</text>
</comment>
<feature type="chain" id="PRO_0000122517" description="Membrane-associated transporter protein">
    <location>
        <begin position="1"/>
        <end position="530"/>
    </location>
</feature>
<feature type="topological domain" description="Cytoplasmic" evidence="2">
    <location>
        <begin position="1"/>
        <end position="46"/>
    </location>
</feature>
<feature type="transmembrane region" description="Helical; Name=1" evidence="2">
    <location>
        <begin position="47"/>
        <end position="67"/>
    </location>
</feature>
<feature type="topological domain" description="Extracellular" evidence="2">
    <location>
        <position position="68"/>
    </location>
</feature>
<feature type="transmembrane region" description="Helical; Name=2" evidence="2">
    <location>
        <begin position="69"/>
        <end position="89"/>
    </location>
</feature>
<feature type="topological domain" description="Cytoplasmic" evidence="2">
    <location>
        <begin position="90"/>
        <end position="110"/>
    </location>
</feature>
<feature type="transmembrane region" description="Helical; Name=3" evidence="2">
    <location>
        <begin position="111"/>
        <end position="131"/>
    </location>
</feature>
<feature type="topological domain" description="Extracellular" evidence="2">
    <location>
        <begin position="132"/>
        <end position="138"/>
    </location>
</feature>
<feature type="transmembrane region" description="Helical; Name=4" evidence="2">
    <location>
        <begin position="139"/>
        <end position="159"/>
    </location>
</feature>
<feature type="topological domain" description="Cytoplasmic" evidence="2">
    <location>
        <begin position="160"/>
        <end position="184"/>
    </location>
</feature>
<feature type="transmembrane region" description="Helical; Name=5" evidence="2">
    <location>
        <begin position="185"/>
        <end position="205"/>
    </location>
</feature>
<feature type="topological domain" description="Extracellular" evidence="2">
    <location>
        <begin position="206"/>
        <end position="216"/>
    </location>
</feature>
<feature type="transmembrane region" description="Helical; Name=6" evidence="2">
    <location>
        <begin position="217"/>
        <end position="237"/>
    </location>
</feature>
<feature type="topological domain" description="Cytoplasmic" evidence="2">
    <location>
        <begin position="238"/>
        <end position="318"/>
    </location>
</feature>
<feature type="transmembrane region" description="Helical; Name=7" evidence="2">
    <location>
        <begin position="319"/>
        <end position="339"/>
    </location>
</feature>
<feature type="topological domain" description="Extracellular" evidence="2">
    <location>
        <begin position="340"/>
        <end position="366"/>
    </location>
</feature>
<feature type="transmembrane region" description="Helical; Name=8" evidence="2">
    <location>
        <begin position="367"/>
        <end position="387"/>
    </location>
</feature>
<feature type="topological domain" description="Cytoplasmic" evidence="2">
    <location>
        <begin position="388"/>
        <end position="398"/>
    </location>
</feature>
<feature type="transmembrane region" description="Helical; Name=9" evidence="2">
    <location>
        <begin position="399"/>
        <end position="419"/>
    </location>
</feature>
<feature type="topological domain" description="Extracellular" evidence="2">
    <location>
        <begin position="420"/>
        <end position="425"/>
    </location>
</feature>
<feature type="transmembrane region" description="Helical; Name=10" evidence="2">
    <location>
        <begin position="426"/>
        <end position="446"/>
    </location>
</feature>
<feature type="topological domain" description="Cytoplasmic" evidence="2">
    <location>
        <begin position="447"/>
        <end position="477"/>
    </location>
</feature>
<feature type="transmembrane region" description="Helical; Name=11" evidence="2">
    <location>
        <begin position="478"/>
        <end position="498"/>
    </location>
</feature>
<feature type="topological domain" description="Extracellular" evidence="2">
    <location>
        <begin position="499"/>
        <end position="504"/>
    </location>
</feature>
<feature type="transmembrane region" description="Helical; Name=12" evidence="2">
    <location>
        <begin position="505"/>
        <end position="525"/>
    </location>
</feature>
<feature type="topological domain" description="Cytoplasmic" evidence="2">
    <location>
        <begin position="526"/>
        <end position="530"/>
    </location>
</feature>
<feature type="glycosylation site" description="N-linked (GlcNAc...) asparagine" evidence="2">
    <location>
        <position position="356"/>
    </location>
</feature>
<feature type="splice variant" id="VSP_006296" description="In isoform 3." evidence="24">
    <location>
        <begin position="129"/>
        <end position="187"/>
    </location>
</feature>
<feature type="splice variant" id="VSP_006297" description="In isoform 2." evidence="23">
    <location>
        <begin position="188"/>
        <end position="295"/>
    </location>
</feature>
<feature type="splice variant" id="VSP_006298" description="In isoform 2." evidence="23">
    <original>YFQKVLVSYIGLKGLYFTGYL</original>
    <variation>CKSFSLLRMSSKSFWSSTTWI</variation>
    <location>
        <begin position="386"/>
        <end position="406"/>
    </location>
</feature>
<feature type="splice variant" id="VSP_006299" description="In isoform 2." evidence="23">
    <location>
        <begin position="407"/>
        <end position="530"/>
    </location>
</feature>
<feature type="splice variant" id="VSP_041220" description="In isoform 4." evidence="23">
    <original>RQQA</original>
    <variation>VCCH</variation>
    <location>
        <begin position="457"/>
        <end position="460"/>
    </location>
</feature>
<feature type="splice variant" id="VSP_041221" description="In isoform 4." evidence="23">
    <location>
        <begin position="461"/>
        <end position="530"/>
    </location>
</feature>
<feature type="sequence variant" id="VAR_067071" description="In OCA4; dbSNP:rs1579564783." evidence="13">
    <original>M</original>
    <variation>I</variation>
    <location>
        <position position="42"/>
    </location>
</feature>
<feature type="sequence variant" id="VAR_022710" description="In OCA4; dbSNP:rs1290584600." evidence="5">
    <original>P</original>
    <variation>A</variation>
    <location>
        <position position="58"/>
    </location>
</feature>
<feature type="sequence variant" id="VAR_022711" description="In OCA4." evidence="6">
    <original>P</original>
    <variation>S</variation>
    <location>
        <position position="58"/>
    </location>
</feature>
<feature type="sequence variant" id="VAR_072602" description="In OCA4; dbSNP:rs925113610." evidence="18">
    <original>L</original>
    <variation>R</variation>
    <location>
        <position position="60"/>
    </location>
</feature>
<feature type="sequence variant" id="VAR_067072" description="In OCA4." evidence="13">
    <original>G</original>
    <variation>S</variation>
    <location>
        <position position="64"/>
    </location>
</feature>
<feature type="sequence variant" id="VAR_089220" description="In OCA4; uncertain significance." evidence="22">
    <original>R</original>
    <variation>G</variation>
    <location>
        <position position="101"/>
    </location>
</feature>
<feature type="sequence variant" id="VAR_073166" description="In OCA4; dbSNP:rs762813061." evidence="17">
    <original>G</original>
    <variation>R</variation>
    <location>
        <position position="110"/>
    </location>
</feature>
<feature type="sequence variant" id="VAR_073167" description="In OCA4." evidence="17">
    <original>L</original>
    <variation>P</variation>
    <location>
        <position position="151"/>
    </location>
</feature>
<feature type="sequence variant" id="VAR_022712" description="In OCA4; dbSNP:rs121912621." evidence="6 9 13 17">
    <original>D</original>
    <variation>N</variation>
    <location>
        <position position="157"/>
    </location>
</feature>
<feature type="sequence variant" id="VAR_073168" description="In OCA4; dbSNP:rs760780597." evidence="17">
    <original>D</original>
    <variation>H</variation>
    <location>
        <position position="160"/>
    </location>
</feature>
<feature type="sequence variant" id="VAR_022713" description="In OCA4; dbSNP:rs1177355814." evidence="6">
    <original>G</original>
    <variation>V</variation>
    <location>
        <position position="188"/>
    </location>
</feature>
<feature type="sequence variant" id="VAR_022714" description="In OCA4; dbSNP:rs146802593." evidence="5">
    <original>W</original>
    <variation>C</variation>
    <location>
        <position position="202"/>
    </location>
</feature>
<feature type="sequence variant" id="VAR_022715" description="In OCA4." evidence="5">
    <location>
        <position position="221"/>
    </location>
</feature>
<feature type="sequence variant" id="VAR_073169" description="In OCA4." evidence="17">
    <original>H</original>
    <variation>Q</variation>
    <location>
        <position position="233"/>
    </location>
</feature>
<feature type="sequence variant" id="VAR_022716" description="Protective factor against melanoma; correlated with dark hair, skin and eye color in Caucasians; dbSNP:rs26722." evidence="5 6 7 10 13 16 19">
    <original>E</original>
    <variation>K</variation>
    <location>
        <position position="272"/>
    </location>
</feature>
<feature type="sequence variant" id="VAR_067073" description="In OCA4; dbSNP:rs553073635." evidence="13">
    <original>T</original>
    <variation>S</variation>
    <location>
        <position position="302"/>
    </location>
</feature>
<feature type="sequence variant" id="VAR_022717" description="In OCA4." evidence="5">
    <original>Y</original>
    <variation>C</variation>
    <location>
        <position position="317"/>
    </location>
</feature>
<feature type="sequence variant" id="VAR_067074" description="In OCA4; dbSNP:rs372465070." evidence="13">
    <original>R</original>
    <variation>C</variation>
    <location>
        <position position="348"/>
    </location>
</feature>
<feature type="sequence variant" id="VAR_073170" description="In OCA4; dbSNP:rs146930801." evidence="17">
    <original>G</original>
    <variation>R</variation>
    <location>
        <position position="349"/>
    </location>
</feature>
<feature type="sequence variant" id="VAR_022718" description="In OCA4; dbSNP:rs121912619." evidence="5">
    <original>L</original>
    <variation>P</variation>
    <location>
        <position position="361"/>
    </location>
</feature>
<feature type="sequence variant" id="VAR_073171" description="In OCA4; dbSNP:rs1307137184." evidence="17">
    <original>E</original>
    <variation>K</variation>
    <location>
        <position position="368"/>
    </location>
</feature>
<feature type="sequence variant" id="VAR_012162" description="Protective factor against melanoma; correlated with dark hair, skin and eye color in Caucasians; decreased protein stability; no effect on subcellular location; dbSNP:rs16891982." evidence="3 4 5 7 8 10 11 13 14 15 16 20">
    <original>L</original>
    <variation>F</variation>
    <location>
        <position position="374"/>
    </location>
</feature>
<feature type="sequence variant" id="VAR_073172" description="In OCA4; dbSNP:rs144503724." evidence="17">
    <original>F</original>
    <variation>L</variation>
    <location>
        <position position="418"/>
    </location>
</feature>
<feature type="sequence variant" id="VAR_089221" description="In OCA4; uncertain significance; dbSNP:rs1447268402." evidence="22">
    <original>S</original>
    <variation>Y</variation>
    <location>
        <position position="435"/>
    </location>
</feature>
<feature type="sequence variant" id="VAR_022719" description="In OCA4; dbSNP:rs1352999116." evidence="5">
    <original>A</original>
    <variation>T</variation>
    <location>
        <position position="477"/>
    </location>
</feature>
<feature type="sequence variant" id="VAR_022720" description="In OCA4; dbSNP:rs121912620." evidence="5">
    <original>A</original>
    <variation>V</variation>
    <location>
        <position position="486"/>
    </location>
</feature>
<feature type="sequence variant" id="VAR_022721" description="In dbSNP:rs11568737." evidence="6">
    <original>T</original>
    <variation>P</variation>
    <location>
        <position position="500"/>
    </location>
</feature>
<feature type="sequence variant" id="VAR_022722" description="In dbSNP:rs3733808." evidence="6 7">
    <original>V</original>
    <variation>L</variation>
    <location>
        <position position="507"/>
    </location>
</feature>
<evidence type="ECO:0000250" key="1">
    <source>
        <dbReference type="UniProtKB" id="P58355"/>
    </source>
</evidence>
<evidence type="ECO:0000255" key="2"/>
<evidence type="ECO:0000269" key="3">
    <source>
    </source>
</evidence>
<evidence type="ECO:0000269" key="4">
    <source>
    </source>
</evidence>
<evidence type="ECO:0000269" key="5">
    <source>
    </source>
</evidence>
<evidence type="ECO:0000269" key="6">
    <source>
    </source>
</evidence>
<evidence type="ECO:0000269" key="7">
    <source>
    </source>
</evidence>
<evidence type="ECO:0000269" key="8">
    <source>
    </source>
</evidence>
<evidence type="ECO:0000269" key="9">
    <source>
    </source>
</evidence>
<evidence type="ECO:0000269" key="10">
    <source>
    </source>
</evidence>
<evidence type="ECO:0000269" key="11">
    <source>
    </source>
</evidence>
<evidence type="ECO:0000269" key="12">
    <source>
    </source>
</evidence>
<evidence type="ECO:0000269" key="13">
    <source>
    </source>
</evidence>
<evidence type="ECO:0000269" key="14">
    <source>
    </source>
</evidence>
<evidence type="ECO:0000269" key="15">
    <source>
    </source>
</evidence>
<evidence type="ECO:0000269" key="16">
    <source>
    </source>
</evidence>
<evidence type="ECO:0000269" key="17">
    <source>
    </source>
</evidence>
<evidence type="ECO:0000269" key="18">
    <source>
    </source>
</evidence>
<evidence type="ECO:0000269" key="19">
    <source>
    </source>
</evidence>
<evidence type="ECO:0000269" key="20">
    <source>
    </source>
</evidence>
<evidence type="ECO:0000269" key="21">
    <source>
    </source>
</evidence>
<evidence type="ECO:0000269" key="22">
    <source>
    </source>
</evidence>
<evidence type="ECO:0000303" key="23">
    <source>
    </source>
</evidence>
<evidence type="ECO:0000305" key="24"/>
<evidence type="ECO:0000312" key="25">
    <source>
        <dbReference type="HGNC" id="HGNC:16472"/>
    </source>
</evidence>
<dbReference type="EMBL" id="AF172849">
    <property type="protein sequence ID" value="AAD51812.1"/>
    <property type="molecule type" value="mRNA"/>
</dbReference>
<dbReference type="EMBL" id="AC139777">
    <property type="status" value="NOT_ANNOTATED_CDS"/>
    <property type="molecule type" value="Genomic_DNA"/>
</dbReference>
<dbReference type="EMBL" id="AC139783">
    <property type="status" value="NOT_ANNOTATED_CDS"/>
    <property type="molecule type" value="Genomic_DNA"/>
</dbReference>
<dbReference type="EMBL" id="BC003597">
    <property type="protein sequence ID" value="AAH03597.1"/>
    <property type="status" value="ALT_FRAME"/>
    <property type="molecule type" value="mRNA"/>
</dbReference>
<dbReference type="EMBL" id="BC064405">
    <property type="protein sequence ID" value="AAH64405.1"/>
    <property type="molecule type" value="mRNA"/>
</dbReference>
<dbReference type="CCDS" id="CCDS3901.1">
    <molecule id="Q9UMX9-1"/>
</dbReference>
<dbReference type="CCDS" id="CCDS43308.1">
    <molecule id="Q9UMX9-4"/>
</dbReference>
<dbReference type="RefSeq" id="NP_001012527.2">
    <molecule id="Q9UMX9-4"/>
    <property type="nucleotide sequence ID" value="NM_001012509.4"/>
</dbReference>
<dbReference type="RefSeq" id="NP_001284346.2">
    <property type="nucleotide sequence ID" value="NM_001297417.2"/>
</dbReference>
<dbReference type="RefSeq" id="NP_057264.3">
    <molecule id="Q9UMX9-1"/>
    <property type="nucleotide sequence ID" value="NM_016180.4"/>
</dbReference>
<dbReference type="SMR" id="Q9UMX9"/>
<dbReference type="BioGRID" id="119335">
    <property type="interactions" value="15"/>
</dbReference>
<dbReference type="FunCoup" id="Q9UMX9">
    <property type="interactions" value="12"/>
</dbReference>
<dbReference type="IntAct" id="Q9UMX9">
    <property type="interactions" value="1"/>
</dbReference>
<dbReference type="STRING" id="9606.ENSP00000296589"/>
<dbReference type="TCDB" id="2.A.2.4.9">
    <property type="family name" value="the glycoside-pentoside-hexuronide (gph):cation symporter family"/>
</dbReference>
<dbReference type="GlyCosmos" id="Q9UMX9">
    <property type="glycosylation" value="1 site, No reported glycans"/>
</dbReference>
<dbReference type="GlyGen" id="Q9UMX9">
    <property type="glycosylation" value="2 sites"/>
</dbReference>
<dbReference type="iPTMnet" id="Q9UMX9"/>
<dbReference type="PhosphoSitePlus" id="Q9UMX9"/>
<dbReference type="BioMuta" id="SLC45A2"/>
<dbReference type="DMDM" id="145572854"/>
<dbReference type="PaxDb" id="9606-ENSP00000296589"/>
<dbReference type="PeptideAtlas" id="Q9UMX9"/>
<dbReference type="ProteomicsDB" id="85224">
    <molecule id="Q9UMX9-1"/>
</dbReference>
<dbReference type="ProteomicsDB" id="85226">
    <molecule id="Q9UMX9-3"/>
</dbReference>
<dbReference type="Antibodypedia" id="22757">
    <property type="antibodies" value="117 antibodies from 22 providers"/>
</dbReference>
<dbReference type="DNASU" id="51151"/>
<dbReference type="Ensembl" id="ENST00000296589.9">
    <molecule id="Q9UMX9-1"/>
    <property type="protein sequence ID" value="ENSP00000296589.4"/>
    <property type="gene ID" value="ENSG00000164175.15"/>
</dbReference>
<dbReference type="Ensembl" id="ENST00000382102.7">
    <molecule id="Q9UMX9-4"/>
    <property type="protein sequence ID" value="ENSP00000371534.3"/>
    <property type="gene ID" value="ENSG00000164175.15"/>
</dbReference>
<dbReference type="GeneID" id="51151"/>
<dbReference type="KEGG" id="hsa:51151"/>
<dbReference type="MANE-Select" id="ENST00000296589.9">
    <property type="protein sequence ID" value="ENSP00000296589.4"/>
    <property type="RefSeq nucleotide sequence ID" value="NM_016180.5"/>
    <property type="RefSeq protein sequence ID" value="NP_057264.4"/>
</dbReference>
<dbReference type="UCSC" id="uc003jid.4">
    <molecule id="Q9UMX9-1"/>
    <property type="organism name" value="human"/>
</dbReference>
<dbReference type="AGR" id="HGNC:16472"/>
<dbReference type="CTD" id="51151"/>
<dbReference type="DisGeNET" id="51151"/>
<dbReference type="GeneCards" id="SLC45A2"/>
<dbReference type="GeneReviews" id="SLC45A2"/>
<dbReference type="HGNC" id="HGNC:16472">
    <property type="gene designation" value="SLC45A2"/>
</dbReference>
<dbReference type="HPA" id="ENSG00000164175">
    <property type="expression patterns" value="Tissue enhanced (liver, skin, testis)"/>
</dbReference>
<dbReference type="MalaCards" id="SLC45A2"/>
<dbReference type="MIM" id="227240">
    <property type="type" value="phenotype"/>
</dbReference>
<dbReference type="MIM" id="606202">
    <property type="type" value="gene"/>
</dbReference>
<dbReference type="MIM" id="606574">
    <property type="type" value="phenotype"/>
</dbReference>
<dbReference type="neXtProt" id="NX_Q9UMX9"/>
<dbReference type="OpenTargets" id="ENSG00000164175"/>
<dbReference type="Orphanet" id="79435">
    <property type="disease" value="Oculocutaneous albinism type 4"/>
</dbReference>
<dbReference type="PharmGKB" id="PA134897756"/>
<dbReference type="VEuPathDB" id="HostDB:ENSG00000164175"/>
<dbReference type="eggNOG" id="KOG0637">
    <property type="taxonomic scope" value="Eukaryota"/>
</dbReference>
<dbReference type="GeneTree" id="ENSGT00950000182914"/>
<dbReference type="HOGENOM" id="CLU_015081_2_0_1"/>
<dbReference type="InParanoid" id="Q9UMX9"/>
<dbReference type="OMA" id="LSMPYAM"/>
<dbReference type="OrthoDB" id="28755at2759"/>
<dbReference type="PAN-GO" id="Q9UMX9">
    <property type="GO annotations" value="2 GO annotations based on evolutionary models"/>
</dbReference>
<dbReference type="PhylomeDB" id="Q9UMX9"/>
<dbReference type="TreeFam" id="TF325412"/>
<dbReference type="PathwayCommons" id="Q9UMX9"/>
<dbReference type="Reactome" id="R-HSA-5662702">
    <property type="pathway name" value="Melanin biosynthesis"/>
</dbReference>
<dbReference type="SignaLink" id="Q9UMX9"/>
<dbReference type="BioGRID-ORCS" id="51151">
    <property type="hits" value="9 hits in 1143 CRISPR screens"/>
</dbReference>
<dbReference type="GeneWiki" id="SLC45A2"/>
<dbReference type="GenomeRNAi" id="51151"/>
<dbReference type="Pharos" id="Q9UMX9">
    <property type="development level" value="Tbio"/>
</dbReference>
<dbReference type="PRO" id="PR:Q9UMX9"/>
<dbReference type="Proteomes" id="UP000005640">
    <property type="component" value="Chromosome 5"/>
</dbReference>
<dbReference type="RNAct" id="Q9UMX9">
    <property type="molecule type" value="protein"/>
</dbReference>
<dbReference type="Bgee" id="ENSG00000164175">
    <property type="expression patterns" value="Expressed in male germ line stem cell (sensu Vertebrata) in testis and 63 other cell types or tissues"/>
</dbReference>
<dbReference type="ExpressionAtlas" id="Q9UMX9">
    <property type="expression patterns" value="baseline and differential"/>
</dbReference>
<dbReference type="GO" id="GO:0033162">
    <property type="term" value="C:melanosome membrane"/>
    <property type="evidence" value="ECO:0000314"/>
    <property type="project" value="UniProtKB"/>
</dbReference>
<dbReference type="GO" id="GO:0016020">
    <property type="term" value="C:membrane"/>
    <property type="evidence" value="ECO:0000318"/>
    <property type="project" value="GO_Central"/>
</dbReference>
<dbReference type="GO" id="GO:0005356">
    <property type="term" value="F:D-glucose:proton symporter activity"/>
    <property type="evidence" value="ECO:0000250"/>
    <property type="project" value="UniProtKB"/>
</dbReference>
<dbReference type="GO" id="GO:0008506">
    <property type="term" value="F:sucrose:proton symporter activity"/>
    <property type="evidence" value="ECO:0000250"/>
    <property type="project" value="ParkinsonsUK-UCL"/>
</dbReference>
<dbReference type="GO" id="GO:0048066">
    <property type="term" value="P:developmental pigmentation"/>
    <property type="evidence" value="ECO:0000250"/>
    <property type="project" value="UniProtKB"/>
</dbReference>
<dbReference type="GO" id="GO:0035752">
    <property type="term" value="P:lysosomal lumen pH elevation"/>
    <property type="evidence" value="ECO:0000314"/>
    <property type="project" value="UniProtKB"/>
</dbReference>
<dbReference type="GO" id="GO:0006583">
    <property type="term" value="P:melanin biosynthetic process from tyrosine"/>
    <property type="evidence" value="ECO:0000314"/>
    <property type="project" value="UniProtKB"/>
</dbReference>
<dbReference type="GO" id="GO:0015770">
    <property type="term" value="P:sucrose transport"/>
    <property type="evidence" value="ECO:0000250"/>
    <property type="project" value="ParkinsonsUK-UCL"/>
</dbReference>
<dbReference type="GO" id="GO:0007601">
    <property type="term" value="P:visual perception"/>
    <property type="evidence" value="ECO:0007669"/>
    <property type="project" value="UniProtKB-KW"/>
</dbReference>
<dbReference type="CDD" id="cd17313">
    <property type="entry name" value="MFS_SLC45_SUC"/>
    <property type="match status" value="1"/>
</dbReference>
<dbReference type="Gene3D" id="1.20.1250.20">
    <property type="entry name" value="MFS general substrate transporter like domains"/>
    <property type="match status" value="1"/>
</dbReference>
<dbReference type="InterPro" id="IPR011701">
    <property type="entry name" value="MFS"/>
</dbReference>
<dbReference type="InterPro" id="IPR036259">
    <property type="entry name" value="MFS_trans_sf"/>
</dbReference>
<dbReference type="PANTHER" id="PTHR19432:SF34">
    <property type="entry name" value="MEMBRANE-ASSOCIATED TRANSPORTER PROTEIN"/>
    <property type="match status" value="1"/>
</dbReference>
<dbReference type="PANTHER" id="PTHR19432">
    <property type="entry name" value="SUGAR TRANSPORTER"/>
    <property type="match status" value="1"/>
</dbReference>
<dbReference type="Pfam" id="PF07690">
    <property type="entry name" value="MFS_1"/>
    <property type="match status" value="1"/>
</dbReference>
<dbReference type="SUPFAM" id="SSF103473">
    <property type="entry name" value="MFS general substrate transporter"/>
    <property type="match status" value="1"/>
</dbReference>
<keyword id="KW-0015">Albinism</keyword>
<keyword id="KW-0025">Alternative splicing</keyword>
<keyword id="KW-0225">Disease variant</keyword>
<keyword id="KW-0325">Glycoprotein</keyword>
<keyword id="KW-0470">Melanin biosynthesis</keyword>
<keyword id="KW-0472">Membrane</keyword>
<keyword id="KW-1267">Proteomics identification</keyword>
<keyword id="KW-1185">Reference proteome</keyword>
<keyword id="KW-0716">Sensory transduction</keyword>
<keyword id="KW-0769">Symport</keyword>
<keyword id="KW-0812">Transmembrane</keyword>
<keyword id="KW-1133">Transmembrane helix</keyword>
<keyword id="KW-0813">Transport</keyword>
<keyword id="KW-0844">Vision</keyword>
<name>S45A2_HUMAN</name>
<accession>Q9UMX9</accession>
<accession>Q6P2P0</accession>
<accession>Q9BTM3</accession>
<protein>
    <recommendedName>
        <fullName evidence="24">Membrane-associated transporter protein</fullName>
    </recommendedName>
    <alternativeName>
        <fullName>Melanoma antigen AIM1</fullName>
        <shortName>Protein AIM-1</shortName>
    </alternativeName>
    <alternativeName>
        <fullName>Solute carrier family 45 member 2</fullName>
    </alternativeName>
</protein>
<gene>
    <name evidence="25" type="primary">SLC45A2</name>
    <name type="synonym">AIM1</name>
    <name type="synonym">MATP</name>
</gene>
<reference key="1">
    <citation type="journal article" date="2001" name="Cancer Res.">
        <title>Use of an in vitro immunoselected tumor line to identify shared melanoma antigens recognized by HLA-A*0201-restricted T cells.</title>
        <authorList>
            <person name="Harada M."/>
            <person name="Li Y.F."/>
            <person name="El-Gamil M."/>
            <person name="Rosenberg S.A."/>
            <person name="Robbins P.F."/>
        </authorList>
    </citation>
    <scope>NUCLEOTIDE SEQUENCE [MRNA] (ISOFORM 1)</scope>
    <scope>VARIANT PHE-374</scope>
    <source>
        <tissue>Melanoma</tissue>
    </source>
</reference>
<reference key="2">
    <citation type="journal article" date="2004" name="Nature">
        <title>The DNA sequence and comparative analysis of human chromosome 5.</title>
        <authorList>
            <person name="Schmutz J."/>
            <person name="Martin J."/>
            <person name="Terry A."/>
            <person name="Couronne O."/>
            <person name="Grimwood J."/>
            <person name="Lowry S."/>
            <person name="Gordon L.A."/>
            <person name="Scott D."/>
            <person name="Xie G."/>
            <person name="Huang W."/>
            <person name="Hellsten U."/>
            <person name="Tran-Gyamfi M."/>
            <person name="She X."/>
            <person name="Prabhakar S."/>
            <person name="Aerts A."/>
            <person name="Altherr M."/>
            <person name="Bajorek E."/>
            <person name="Black S."/>
            <person name="Branscomb E."/>
            <person name="Caoile C."/>
            <person name="Challacombe J.F."/>
            <person name="Chan Y.M."/>
            <person name="Denys M."/>
            <person name="Detter J.C."/>
            <person name="Escobar J."/>
            <person name="Flowers D."/>
            <person name="Fotopulos D."/>
            <person name="Glavina T."/>
            <person name="Gomez M."/>
            <person name="Gonzales E."/>
            <person name="Goodstein D."/>
            <person name="Grigoriev I."/>
            <person name="Groza M."/>
            <person name="Hammon N."/>
            <person name="Hawkins T."/>
            <person name="Haydu L."/>
            <person name="Israni S."/>
            <person name="Jett J."/>
            <person name="Kadner K."/>
            <person name="Kimball H."/>
            <person name="Kobayashi A."/>
            <person name="Lopez F."/>
            <person name="Lou Y."/>
            <person name="Martinez D."/>
            <person name="Medina C."/>
            <person name="Morgan J."/>
            <person name="Nandkeshwar R."/>
            <person name="Noonan J.P."/>
            <person name="Pitluck S."/>
            <person name="Pollard M."/>
            <person name="Predki P."/>
            <person name="Priest J."/>
            <person name="Ramirez L."/>
            <person name="Retterer J."/>
            <person name="Rodriguez A."/>
            <person name="Rogers S."/>
            <person name="Salamov A."/>
            <person name="Salazar A."/>
            <person name="Thayer N."/>
            <person name="Tice H."/>
            <person name="Tsai M."/>
            <person name="Ustaszewska A."/>
            <person name="Vo N."/>
            <person name="Wheeler J."/>
            <person name="Wu K."/>
            <person name="Yang J."/>
            <person name="Dickson M."/>
            <person name="Cheng J.-F."/>
            <person name="Eichler E.E."/>
            <person name="Olsen A."/>
            <person name="Pennacchio L.A."/>
            <person name="Rokhsar D.S."/>
            <person name="Richardson P."/>
            <person name="Lucas S.M."/>
            <person name="Myers R.M."/>
            <person name="Rubin E.M."/>
        </authorList>
    </citation>
    <scope>NUCLEOTIDE SEQUENCE [LARGE SCALE GENOMIC DNA]</scope>
</reference>
<reference key="3">
    <citation type="journal article" date="2004" name="Genome Res.">
        <title>The status, quality, and expansion of the NIH full-length cDNA project: the Mammalian Gene Collection (MGC).</title>
        <authorList>
            <consortium name="The MGC Project Team"/>
        </authorList>
    </citation>
    <scope>NUCLEOTIDE SEQUENCE [LARGE SCALE MRNA] (ISOFORMS 2 AND 4)</scope>
    <scope>VARIANT PHE-374</scope>
    <source>
        <tissue>Skin</tissue>
    </source>
</reference>
<reference key="4">
    <citation type="journal article" date="2006" name="J. Proteome Res.">
        <title>Proteomic and bioinformatic characterization of the biogenesis and function of melanosomes.</title>
        <authorList>
            <person name="Chi A."/>
            <person name="Valencia J.C."/>
            <person name="Hu Z.-Z."/>
            <person name="Watabe H."/>
            <person name="Yamaguchi H."/>
            <person name="Mangini N.J."/>
            <person name="Huang H."/>
            <person name="Canfield V.A."/>
            <person name="Cheng K.C."/>
            <person name="Yang F."/>
            <person name="Abe R."/>
            <person name="Yamagishi S."/>
            <person name="Shabanowitz J."/>
            <person name="Hearing V.J."/>
            <person name="Wu C."/>
            <person name="Appella E."/>
            <person name="Hunt D.F."/>
        </authorList>
    </citation>
    <scope>SUBCELLULAR LOCATION [LARGE SCALE ANALYSIS]</scope>
    <scope>FUNCTION [LARGE SCALE ANALYSIS]</scope>
    <source>
        <tissue>Melanoma</tissue>
    </source>
</reference>
<reference key="5">
    <citation type="journal article" date="2022" name="J. Invest. Dermatol.">
        <title>Ablation of H+/glucose Exporter SLC45A2 Enhances Melanosomal Glycolysis to Inhibit Melanin Biosynthesis and Promote Melanoma Metastasis.</title>
        <authorList>
            <person name="Liu Y."/>
            <person name="Chi W."/>
            <person name="Tao L."/>
            <person name="Wang G."/>
            <person name="Deepak R.N.V.K."/>
            <person name="Sheng L."/>
            <person name="Chen T."/>
            <person name="Feng Y."/>
            <person name="Cao X."/>
            <person name="Cheng L."/>
            <person name="Zhao X."/>
            <person name="Liu X."/>
            <person name="Deng H."/>
            <person name="Fan H."/>
            <person name="Jiang P."/>
            <person name="Chen L."/>
        </authorList>
    </citation>
    <scope>FUNCTION</scope>
</reference>
<reference key="6">
    <citation type="journal article" date="2001" name="Am. J. Hum. Genet.">
        <title>Mutations in the human orthologue of the mouse underwhite gene (uw) underlie a new form of oculocutaneous albinism, OCA4.</title>
        <authorList>
            <person name="Newton J.M."/>
            <person name="Cohen-Barak O."/>
            <person name="Hagiwara N."/>
            <person name="Gardner J.M."/>
            <person name="Davisson M.T."/>
            <person name="King R.A."/>
            <person name="Brilliant M.H."/>
        </authorList>
    </citation>
    <scope>VARIANT PHE-374</scope>
    <scope>INVOLVEMENT IN OCA4</scope>
</reference>
<reference key="7">
    <citation type="journal article" date="2004" name="Am. J. Hum. Genet.">
        <title>Oculocutaneous albinism type 4 is one of the most common types of albinism in Japan.</title>
        <authorList>
            <person name="Inagaki K."/>
            <person name="Suzuki T."/>
            <person name="Shimizu H."/>
            <person name="Ishii N."/>
            <person name="Umezawa Y."/>
            <person name="Tada J."/>
            <person name="Kikuchi N."/>
            <person name="Takata M."/>
            <person name="Takamori K."/>
            <person name="Kishibe M."/>
            <person name="Tanaka M."/>
            <person name="Miyamura Y."/>
            <person name="Ito S."/>
            <person name="Tomita Y."/>
        </authorList>
    </citation>
    <scope>VARIANTS OCA4 SER-58; ASN-157 AND VAL-188</scope>
    <scope>VARIANTS LYS-272; PRO-500 AND LEU-507</scope>
</reference>
<reference key="8">
    <citation type="journal article" date="2004" name="Hum. Mutat.">
        <title>Mutations in the MATP gene in five German patients affected by oculocutaneous albinism type 4.</title>
        <authorList>
            <person name="Rundshagen U."/>
            <person name="Zuehlke C."/>
            <person name="Opitz S."/>
            <person name="Schwinger E."/>
            <person name="Kaesmann-Kellner B."/>
        </authorList>
    </citation>
    <scope>VARIANTS OCA4 ALA-58; CYS-202; PHE-221 DEL; CYS-317; PRO-361; THR-477 AND VAL-486</scope>
    <scope>VARIANTS LYS-272 AND PHE-374</scope>
</reference>
<reference key="9">
    <citation type="journal article" date="2004" name="Int. J. Legal Med.">
        <title>MATP polymorphisms in Germans and Japanese: the L374F mutation as a population marker for Caucasoids.</title>
        <authorList>
            <person name="Yuasa I."/>
            <person name="Umetsu K."/>
            <person name="Watanabe G."/>
            <person name="Nakamura H."/>
            <person name="Endoh M."/>
            <person name="Irizawa Y."/>
        </authorList>
    </citation>
    <scope>VARIANTS LYS-272; PHE-374 AND LEU-507</scope>
</reference>
<reference key="10">
    <citation type="journal article" date="2005" name="Br. J. Dermatol.">
        <title>A Korean case of oculocutaneous albinism type IV caused by a D157N mutation in the MATP gene.</title>
        <authorList>
            <person name="Suzuki T."/>
            <person name="Inagaki K."/>
            <person name="Fukai K."/>
            <person name="Obana A."/>
            <person name="Lee S.-T."/>
            <person name="Tomita Y."/>
        </authorList>
    </citation>
    <scope>VARIANT OCA4 ASN-157</scope>
</reference>
<reference key="11">
    <citation type="journal article" date="2005" name="Hum. Mutat.">
        <title>Single nucleotide polymorphisms in the MATP gene are associated with normal human pigmentation variation.</title>
        <authorList>
            <person name="Graf J."/>
            <person name="Hodgson R."/>
            <person name="van Daal A."/>
        </authorList>
    </citation>
    <scope>VARIANTS LYS-272 AND PHE-374</scope>
</reference>
<reference key="12">
    <citation type="journal article" date="2006" name="Ann. Hum. Genet.">
        <title>Distribution of the F374 allele of the SLC45A2 (MATP) gene and founder-haplotype analysis.</title>
        <authorList>
            <person name="Yuasa I."/>
            <person name="Umetsu K."/>
            <person name="Harihara S."/>
            <person name="Kido A."/>
            <person name="Miyoshi A."/>
            <person name="Saitou N."/>
            <person name="Dashnyam B."/>
            <person name="Jin F."/>
            <person name="Lucotte G."/>
            <person name="Chattopadhyay P.K."/>
            <person name="Henke L."/>
            <person name="Henke J."/>
        </authorList>
    </citation>
    <scope>VARIANT PHE-374</scope>
</reference>
<reference key="13">
    <citation type="journal article" date="2007" name="Am. J. Hum. Genet.">
        <title>A genomewide association study of skin pigmentation in a South Asian population.</title>
        <authorList>
            <person name="Stokowski R.P."/>
            <person name="Pant P.V.K."/>
            <person name="Dadd T."/>
            <person name="Fereday A."/>
            <person name="Hinds D.A."/>
            <person name="Jarman C."/>
            <person name="Filsell W."/>
            <person name="Ginger R.S."/>
            <person name="Green M.R."/>
            <person name="van der Ouderaa F.J."/>
            <person name="Cox D.R."/>
        </authorList>
    </citation>
    <scope>VARIANT PHE-374</scope>
    <scope>ASSOCIATION WITH SHEP5</scope>
</reference>
<reference key="14">
    <citation type="journal article" date="2007" name="Mol. Vis.">
        <title>SLC45A2 variations in Indian oculocutaneous albinism patients.</title>
        <authorList>
            <person name="Sengupta M."/>
            <person name="Chaki M."/>
            <person name="Arti N."/>
            <person name="Ray K."/>
        </authorList>
    </citation>
    <scope>VARIANTS OCA4 ILE-42; SER-64; ASN-157; SER-302 AND CYS-348</scope>
    <scope>VARIANTS LYS-272 AND PHE-374</scope>
</reference>
<reference key="15">
    <citation type="journal article" date="2008" name="Hum. Mutat.">
        <title>Variants of the MATP/SLC45A2 gene are protective for melanoma in the French population.</title>
        <authorList>
            <person name="Guedj M."/>
            <person name="Bourillon A."/>
            <person name="Combadieres C."/>
            <person name="Rodero M."/>
            <person name="Dieude P."/>
            <person name="Descamps V."/>
            <person name="Dupin N."/>
            <person name="Wolkenstein P."/>
            <person name="Aegerter P."/>
            <person name="Lebbe C."/>
            <person name="Basset-Seguin N."/>
            <person name="Prum B."/>
            <person name="Saiag P."/>
            <person name="Grandchamp B."/>
            <person name="Soufir N."/>
            <person name="Saiag P."/>
            <person name="Lebbe C."/>
            <person name="Basset Seguin N."/>
            <person name="Wolkenstein P."/>
            <person name="Dupin N."/>
            <person name="Descamps V."/>
            <person name="Verola O."/>
            <person name="Aegerter P."/>
            <person name="Soufir N."/>
        </authorList>
    </citation>
    <scope>VARIANTS LYS-272 AND PHE-374</scope>
    <scope>ASSOCIATION WITH SHEP5</scope>
    <scope>INVOLVEMENT IN SUSCEPTIBILITY TO MELANOMA</scope>
</reference>
<reference key="16">
    <citation type="journal article" date="2008" name="Hum. Mutat.">
        <title>SLC45A2: a novel malignant melanoma-associated gene.</title>
        <authorList>
            <person name="Fernandez L.P."/>
            <person name="Milne R.L."/>
            <person name="Pita G."/>
            <person name="Aviles J.A."/>
            <person name="Lazaro P."/>
            <person name="Benitez J."/>
            <person name="Ribas G."/>
        </authorList>
    </citation>
    <scope>VARIANT PHE-374</scope>
    <scope>ASSOCIATION WITH SHEP5</scope>
    <scope>INVOLVEMENT IN SUSCEPTIBILITY TO MELANOMA</scope>
</reference>
<reference key="17">
    <citation type="journal article" date="2010" name="J. Invest. Dermatol.">
        <title>A comprehensive analysis reveals mutational spectra and common alleles in Chinese patients with oculocutaneous albinism.</title>
        <authorList>
            <person name="Wei A."/>
            <person name="Wang Y."/>
            <person name="Long Y."/>
            <person name="Wang Y."/>
            <person name="Guo X."/>
            <person name="Zhou Z."/>
            <person name="Zhu W."/>
            <person name="Liu J."/>
            <person name="Bian X."/>
            <person name="Lian S."/>
            <person name="Li W."/>
        </authorList>
    </citation>
    <scope>VARIANTS OCA4 ARG-110; PRO-151; ASN-157; HIS-160; GLN-233; ARG-349; LYS-368 AND LEU-418</scope>
</reference>
<reference key="18">
    <citation type="journal article" date="2013" name="Hum. Mutat.">
        <title>DNA variations in oculocutaneous albinism: an updated mutation list and current outstanding issues in molecular diagnostics.</title>
        <authorList>
            <person name="Simeonov D.R."/>
            <person name="Wang X."/>
            <person name="Wang C."/>
            <person name="Sergeev Y."/>
            <person name="Dolinska M."/>
            <person name="Bower M."/>
            <person name="Fischer R."/>
            <person name="Winer D."/>
            <person name="Dubrovsky G."/>
            <person name="Balog J.Z."/>
            <person name="Huizing M."/>
            <person name="Hart R."/>
            <person name="Zein W.M."/>
            <person name="Gahl W.A."/>
            <person name="Brooks B.P."/>
            <person name="Adams D.R."/>
        </authorList>
    </citation>
    <scope>VARIANT OCA4 ARG-60</scope>
</reference>
<reference key="19">
    <citation type="journal article" date="2015" name="Clin. Exp. Dermatol.">
        <title>Mutational spectrum of the TYR and SLC45A2 genes in Pakistani families with oculocutaneous albinism, and potential founder effect of missense substitution (p.Arg77Gln) of tyrosinase.</title>
        <authorList>
            <person name="Shah S.A."/>
            <person name="Raheem N."/>
            <person name="Daud S."/>
            <person name="Mubeen J."/>
            <person name="Shaikh A.A."/>
            <person name="Baloch A.H."/>
            <person name="Nadeem A."/>
            <person name="Tayyab M."/>
            <person name="Babar M.E."/>
            <person name="Ahmad J."/>
        </authorList>
    </citation>
    <scope>VARIANT LYS-272</scope>
</reference>
<reference key="20">
    <citation type="journal article" date="2020" name="Mol. Biol. Cell">
        <title>SLC45A2 protein stability and regulation of melanosome pH determine melanocyte pigmentation.</title>
        <authorList>
            <person name="Le L."/>
            <person name="Escobar I.E."/>
            <person name="Ho T."/>
            <person name="Lefkovith A.J."/>
            <person name="Latteri E."/>
            <person name="Haltaufderhyde K.D."/>
            <person name="Dennis M.K."/>
            <person name="Plowright L."/>
            <person name="Sviderskaya E.V."/>
            <person name="Bennett D.C."/>
            <person name="Oancea E."/>
            <person name="Marks M.S."/>
        </authorList>
    </citation>
    <scope>VARIANT PHE-374</scope>
    <scope>CHARACTERIZATION OF VARIANT PHE-374</scope>
    <scope>POLYMORPHISM</scope>
    <scope>FUNCTION</scope>
    <scope>SUBCELLULAR LOCATION</scope>
    <scope>TISSUE SPECIFICITY</scope>
    <scope>DEVELOPMENTAL STAGE</scope>
</reference>
<reference key="21">
    <citation type="journal article" date="2024" name="Mol. Genet. Genomic Med.">
        <title>Oculocutaneous albinism type 4: Novel compound heterozygous mutations in the SLC45A2 gene in a Chinese case.</title>
        <authorList>
            <person name="He D."/>
            <person name="Liu X."/>
            <person name="Yao T."/>
            <person name="Hu J."/>
            <person name="Zheng X."/>
            <person name="Tang L."/>
            <person name="Fan X."/>
        </authorList>
    </citation>
    <scope>VARIANTS OCA4 GLY-101 AND TYR-435</scope>
</reference>
<organism>
    <name type="scientific">Homo sapiens</name>
    <name type="common">Human</name>
    <dbReference type="NCBI Taxonomy" id="9606"/>
    <lineage>
        <taxon>Eukaryota</taxon>
        <taxon>Metazoa</taxon>
        <taxon>Chordata</taxon>
        <taxon>Craniata</taxon>
        <taxon>Vertebrata</taxon>
        <taxon>Euteleostomi</taxon>
        <taxon>Mammalia</taxon>
        <taxon>Eutheria</taxon>
        <taxon>Euarchontoglires</taxon>
        <taxon>Primates</taxon>
        <taxon>Haplorrhini</taxon>
        <taxon>Catarrhini</taxon>
        <taxon>Hominidae</taxon>
        <taxon>Homo</taxon>
    </lineage>
</organism>
<sequence length="530" mass="58268">MGSNSGQAGRHIYKSLADDGPFDSVEPPKRPTSRLIMHSMAMFGREFCYAVEAAYVTPVLLSVGLPSSLYSIVWFLSPILGFLLQPVVGSASDHCRSRWGRRRPYILTLGVMMLVGMALYLNGATVVAALIANPRRKLVWAISVTMIGVVLFDFAADFIDGPIKAYLFDVCSHQDKEKGLHYHALFTGFGGALGYLLGAIDWAHLELGRLLGTEFQVMFFFSALVLTLCFTVHLCSISEAPLTEVAKGIPPQQTPQDPPLSSDGMYEYGSIEKVKNGYVNPELAMQGAKNKNHAEQTRRAMTLKSLLRALVNMPPHYRYLCISHLIGWTAFLSNMLFFTDFMGQIVYRGDPYSAHNSTEFLIYERGVEVGCWGLCINSVFSSLYSYFQKVLVSYIGLKGLYFTGYLLFGLGTGFIGLFPNVYSTLVLCSLFGVMSSTLYTVPFNLITEYHREEEKERQQAPGGDPDNSVRGKGMDCATLTCMVQLAQILVGGGLGFLVNTAGTVVVVVITASAVALIGCCFVALFVRYVD</sequence>